<organism>
    <name type="scientific">Rattus norvegicus</name>
    <name type="common">Rat</name>
    <dbReference type="NCBI Taxonomy" id="10116"/>
    <lineage>
        <taxon>Eukaryota</taxon>
        <taxon>Metazoa</taxon>
        <taxon>Chordata</taxon>
        <taxon>Craniata</taxon>
        <taxon>Vertebrata</taxon>
        <taxon>Euteleostomi</taxon>
        <taxon>Mammalia</taxon>
        <taxon>Eutheria</taxon>
        <taxon>Euarchontoglires</taxon>
        <taxon>Glires</taxon>
        <taxon>Rodentia</taxon>
        <taxon>Myomorpha</taxon>
        <taxon>Muroidea</taxon>
        <taxon>Muridae</taxon>
        <taxon>Murinae</taxon>
        <taxon>Rattus</taxon>
    </lineage>
</organism>
<keyword id="KW-0007">Acetylation</keyword>
<keyword id="KW-0112">Calmodulin-binding</keyword>
<keyword id="KW-0963">Cytoplasm</keyword>
<keyword id="KW-0217">Developmental protein</keyword>
<keyword id="KW-0221">Differentiation</keyword>
<keyword id="KW-0238">DNA-binding</keyword>
<keyword id="KW-0488">Methylation</keyword>
<keyword id="KW-0539">Nucleus</keyword>
<keyword id="KW-0597">Phosphoprotein</keyword>
<keyword id="KW-1185">Reference proteome</keyword>
<keyword id="KW-0804">Transcription</keyword>
<keyword id="KW-0805">Transcription regulation</keyword>
<dbReference type="EMBL" id="CO400850">
    <property type="status" value="NOT_ANNOTATED_CDS"/>
    <property type="molecule type" value="mRNA"/>
</dbReference>
<dbReference type="RefSeq" id="NP_001100027.1">
    <property type="nucleotide sequence ID" value="NM_001106557.1"/>
</dbReference>
<dbReference type="BMRB" id="P69736"/>
<dbReference type="SMR" id="P69736"/>
<dbReference type="BioGRID" id="255402">
    <property type="interactions" value="1"/>
</dbReference>
<dbReference type="FunCoup" id="P69736">
    <property type="interactions" value="2530"/>
</dbReference>
<dbReference type="IntAct" id="P69736">
    <property type="interactions" value="1"/>
</dbReference>
<dbReference type="MINT" id="P69736"/>
<dbReference type="STRING" id="10116.ENSRNOP00000022196"/>
<dbReference type="GlyGen" id="P69736">
    <property type="glycosylation" value="1 site"/>
</dbReference>
<dbReference type="iPTMnet" id="P69736"/>
<dbReference type="PhosphoSitePlus" id="P69736"/>
<dbReference type="jPOST" id="P69736"/>
<dbReference type="PaxDb" id="10116-ENSRNOP00000022196"/>
<dbReference type="GeneID" id="296570"/>
<dbReference type="KEGG" id="rno:296570"/>
<dbReference type="UCSC" id="RGD:1308073">
    <property type="organism name" value="rat"/>
</dbReference>
<dbReference type="AGR" id="RGD:1308073"/>
<dbReference type="CTD" id="8721"/>
<dbReference type="RGD" id="1308073">
    <property type="gene designation" value="Edf1"/>
</dbReference>
<dbReference type="VEuPathDB" id="HostDB:ENSRNOG00000016272"/>
<dbReference type="eggNOG" id="KOG3398">
    <property type="taxonomic scope" value="Eukaryota"/>
</dbReference>
<dbReference type="HOGENOM" id="CLU_112609_0_1_1"/>
<dbReference type="InParanoid" id="P69736"/>
<dbReference type="OrthoDB" id="21991at9989"/>
<dbReference type="PhylomeDB" id="P69736"/>
<dbReference type="TreeFam" id="TF300064"/>
<dbReference type="PRO" id="PR:P69736"/>
<dbReference type="Proteomes" id="UP000002494">
    <property type="component" value="Chromosome 3"/>
</dbReference>
<dbReference type="Bgee" id="ENSRNOG00000016272">
    <property type="expression patterns" value="Expressed in pancreas and 20 other cell types or tissues"/>
</dbReference>
<dbReference type="ExpressionAtlas" id="P69736">
    <property type="expression patterns" value="baseline and differential"/>
</dbReference>
<dbReference type="GO" id="GO:0005737">
    <property type="term" value="C:cytoplasm"/>
    <property type="evidence" value="ECO:0000266"/>
    <property type="project" value="RGD"/>
</dbReference>
<dbReference type="GO" id="GO:0005634">
    <property type="term" value="C:nucleus"/>
    <property type="evidence" value="ECO:0000266"/>
    <property type="project" value="RGD"/>
</dbReference>
<dbReference type="GO" id="GO:0005516">
    <property type="term" value="F:calmodulin binding"/>
    <property type="evidence" value="ECO:0007669"/>
    <property type="project" value="UniProtKB-KW"/>
</dbReference>
<dbReference type="GO" id="GO:0003677">
    <property type="term" value="F:DNA binding"/>
    <property type="evidence" value="ECO:0007669"/>
    <property type="project" value="UniProtKB-KW"/>
</dbReference>
<dbReference type="GO" id="GO:0001094">
    <property type="term" value="F:TFIID-class transcription factor complex binding"/>
    <property type="evidence" value="ECO:0000266"/>
    <property type="project" value="RGD"/>
</dbReference>
<dbReference type="GO" id="GO:0003713">
    <property type="term" value="F:transcription coactivator activity"/>
    <property type="evidence" value="ECO:0000266"/>
    <property type="project" value="RGD"/>
</dbReference>
<dbReference type="GO" id="GO:0030154">
    <property type="term" value="P:cell differentiation"/>
    <property type="evidence" value="ECO:0007669"/>
    <property type="project" value="UniProtKB-KW"/>
</dbReference>
<dbReference type="CDD" id="cd00093">
    <property type="entry name" value="HTH_XRE"/>
    <property type="match status" value="1"/>
</dbReference>
<dbReference type="FunFam" id="1.10.260.40:FF:000015">
    <property type="entry name" value="Endothelial differentiation-related factor 1"/>
    <property type="match status" value="1"/>
</dbReference>
<dbReference type="Gene3D" id="1.10.260.40">
    <property type="entry name" value="lambda repressor-like DNA-binding domains"/>
    <property type="match status" value="1"/>
</dbReference>
<dbReference type="InterPro" id="IPR001387">
    <property type="entry name" value="Cro/C1-type_HTH"/>
</dbReference>
<dbReference type="InterPro" id="IPR010982">
    <property type="entry name" value="Lambda_DNA-bd_dom_sf"/>
</dbReference>
<dbReference type="InterPro" id="IPR013729">
    <property type="entry name" value="MBF1_N"/>
</dbReference>
<dbReference type="PANTHER" id="PTHR10245:SF15">
    <property type="entry name" value="ENDOTHELIAL DIFFERENTIATION-RELATED FACTOR 1"/>
    <property type="match status" value="1"/>
</dbReference>
<dbReference type="PANTHER" id="PTHR10245">
    <property type="entry name" value="ENDOTHELIAL DIFFERENTIATION-RELATED FACTOR 1 MULTIPROTEIN BRIDGING FACTOR 1"/>
    <property type="match status" value="1"/>
</dbReference>
<dbReference type="Pfam" id="PF01381">
    <property type="entry name" value="HTH_3"/>
    <property type="match status" value="1"/>
</dbReference>
<dbReference type="Pfam" id="PF08523">
    <property type="entry name" value="MBF1"/>
    <property type="match status" value="1"/>
</dbReference>
<dbReference type="SMART" id="SM00530">
    <property type="entry name" value="HTH_XRE"/>
    <property type="match status" value="1"/>
</dbReference>
<dbReference type="SUPFAM" id="SSF47413">
    <property type="entry name" value="lambda repressor-like DNA-binding domains"/>
    <property type="match status" value="1"/>
</dbReference>
<dbReference type="PROSITE" id="PS50943">
    <property type="entry name" value="HTH_CROC1"/>
    <property type="match status" value="1"/>
</dbReference>
<sequence>MAESDWDTVTVLRKKGPTAAQAKSKQAILAAQRRGEDVETSKKWAAGQNKQHSITKNTAKLDRETEELHHDRVTLEVGKVIQRGRQSKGLTQKDLATKINEKPQVIADYESGRAIPNNQVLGKIERAIGLKLRGKDIGKPIEKGPKAK</sequence>
<comment type="function">
    <text evidence="1 5">Transcriptional coactivator stimulating NR5A1 and ligand-dependent NR1H3/LXRA and PPARG transcriptional activities. Enhances the DNA-binding activity of ATF1, ATF2, CREB1 and NR5A1. Regulates nitric oxid synthase activity probably by sequestering calmodulin in the cytoplasm. Might function in endothelial cells differentiation, hormone-induced cardiomyocytes hypertrophy and lipid metabolism (By similarity).</text>
</comment>
<comment type="subunit">
    <text evidence="1 5 6">Interacts with TBP and the transcription factor IID (TFIID) complex, NR5A2, NR1H3 and PPARG. Interaction with TBP is regulated by phosphorylation. Binds NR5A1, ATF1 and FOS via their conserved basic region (By similarity). Interacts with JUN. Binding to calmodulin is regulated by calcium and phosphorylation of the IQ motif.</text>
</comment>
<comment type="subcellular location">
    <subcellularLocation>
        <location evidence="1">Cytoplasm</location>
    </subcellularLocation>
    <subcellularLocation>
        <location evidence="1">Nucleus</location>
    </subcellularLocation>
    <text evidence="1 5">Also nuclear upon binding to NR5A1 and treatment of cells with TPA or forskolin (By similarity). Localized mainly in soma and dendritic processes of neurons.</text>
</comment>
<comment type="tissue specificity">
    <text evidence="5 6">Expressed in cardiomyocytes, cortical and hippocampal neurons.</text>
</comment>
<comment type="developmental stage">
    <text evidence="5 6">Expressed in newborn and adult heart and brain tissues. Expression is not evident in prenatal days.</text>
</comment>
<comment type="induction">
    <text>Up-regulated upon cardiomyocytes hypertrophy.</text>
</comment>
<comment type="domain">
    <text>The IQ motif, which is involved in calmodulin binding, overlaps with the binding domain for nuclear receptors and transcription factors. Its phosphorylation probably allows a switch between the two activities of the protein.</text>
</comment>
<comment type="PTM">
    <text evidence="1">Phosphorylated.</text>
</comment>
<name>EDF1_RAT</name>
<evidence type="ECO:0000250" key="1"/>
<evidence type="ECO:0000250" key="2">
    <source>
        <dbReference type="UniProtKB" id="O60869"/>
    </source>
</evidence>
<evidence type="ECO:0000255" key="3">
    <source>
        <dbReference type="PROSITE-ProRule" id="PRU00257"/>
    </source>
</evidence>
<evidence type="ECO:0000256" key="4">
    <source>
        <dbReference type="SAM" id="MobiDB-lite"/>
    </source>
</evidence>
<evidence type="ECO:0000269" key="5">
    <source>
    </source>
</evidence>
<evidence type="ECO:0000269" key="6">
    <source>
    </source>
</evidence>
<protein>
    <recommendedName>
        <fullName>Endothelial differentiation-related factor 1</fullName>
        <shortName>EDF-1</shortName>
    </recommendedName>
    <alternativeName>
        <fullName>Calmodulin-associated peptide 19</fullName>
        <shortName>CAP-19</shortName>
    </alternativeName>
    <alternativeName>
        <fullName>Multiprotein-bridging factor 1</fullName>
        <shortName>MBF1</shortName>
    </alternativeName>
</protein>
<feature type="initiator methionine" description="Removed" evidence="2">
    <location>
        <position position="1"/>
    </location>
</feature>
<feature type="chain" id="PRO_0000149797" description="Endothelial differentiation-related factor 1">
    <location>
        <begin position="2"/>
        <end position="148"/>
    </location>
</feature>
<feature type="domain" description="HTH cro/C1-type" evidence="3">
    <location>
        <begin position="81"/>
        <end position="135"/>
    </location>
</feature>
<feature type="DNA-binding region" description="H-T-H motif" evidence="3">
    <location>
        <begin position="92"/>
        <end position="111"/>
    </location>
</feature>
<feature type="region of interest" description="Disordered" evidence="4">
    <location>
        <begin position="34"/>
        <end position="67"/>
    </location>
</feature>
<feature type="region of interest" description="Interaction with NR5A2, PPARG and NR1H3" evidence="1">
    <location>
        <begin position="37"/>
        <end position="113"/>
    </location>
</feature>
<feature type="region of interest" description="Interaction with TBP and NR5A1" evidence="1">
    <location>
        <begin position="69"/>
        <end position="108"/>
    </location>
</feature>
<feature type="short sequence motif" description="IQ motif">
    <location>
        <begin position="81"/>
        <end position="88"/>
    </location>
</feature>
<feature type="compositionally biased region" description="Polar residues" evidence="4">
    <location>
        <begin position="48"/>
        <end position="58"/>
    </location>
</feature>
<feature type="modified residue" description="N-acetylalanine" evidence="2">
    <location>
        <position position="2"/>
    </location>
</feature>
<feature type="modified residue" description="Phosphoserine" evidence="2">
    <location>
        <position position="4"/>
    </location>
</feature>
<feature type="modified residue" description="N6-methyllysine" evidence="2">
    <location>
        <position position="25"/>
    </location>
</feature>
<feature type="mutagenesis site" description="Loss of binding to CALM." evidence="5">
    <original>S</original>
    <variation>D</variation>
    <location>
        <position position="87"/>
    </location>
</feature>
<gene>
    <name type="primary">Edf1</name>
</gene>
<reference key="1">
    <citation type="journal article" date="1998" name="Brain Res. Mol. Brain Res.">
        <title>Identification of a neuronal calmodulin-binding peptide, CAP-19, containing an IQ motif.</title>
        <authorList>
            <person name="Smith M.L."/>
            <person name="Johanson R.A."/>
            <person name="Rogers K.E."/>
            <person name="Coleman P.D."/>
            <person name="Slemmon J.R."/>
        </authorList>
    </citation>
    <scope>NUCLEOTIDE SEQUENCE [MRNA]</scope>
    <scope>IDENTIFICATION BY MASS SPECTROMETRY</scope>
    <scope>TISSUE SPECIFICITY</scope>
    <scope>DEVELOPMENTAL STAGE</scope>
    <scope>INTERACTION WITH CALM</scope>
    <source>
        <tissue>Brain cortex</tissue>
    </source>
</reference>
<reference key="2">
    <citation type="journal article" date="2004" name="Genome Res.">
        <title>The status, quality, and expansion of the NIH full-length cDNA project: the Mammalian Gene Collection (MGC).</title>
        <authorList>
            <consortium name="The MGC Project Team"/>
        </authorList>
    </citation>
    <scope>NUCLEOTIDE SEQUENCE [LARGE SCALE MRNA]</scope>
</reference>
<reference key="3">
    <citation type="journal article" date="2003" name="Exp. Cell Res.">
        <title>Multiprotein bridging factor 1 cooperates with c-Jun and is necessary for cardiac hypertrophy in vitro.</title>
        <authorList>
            <person name="Busk P.K."/>
            <person name="Wulf-Andersen L."/>
            <person name="Stroem C.C."/>
            <person name="Enevoldsen M."/>
            <person name="Thirstrup K."/>
            <person name="Haunsoe S."/>
            <person name="Sheikh S.P."/>
        </authorList>
    </citation>
    <scope>INTERACTION WITH CALM AND JUN</scope>
    <scope>TISSUE SPECIFICITY</scope>
    <scope>DEVELOPMENTAL STAGE</scope>
    <scope>SUBCELLULAR LOCATION</scope>
    <scope>MUTAGENESIS OF SER-87</scope>
    <scope>FUNCTION</scope>
</reference>
<accession>P69736</accession>
<proteinExistence type="evidence at protein level"/>